<accession>Q2GKQ8</accession>
<organism>
    <name type="scientific">Anaplasma phagocytophilum (strain HZ)</name>
    <dbReference type="NCBI Taxonomy" id="212042"/>
    <lineage>
        <taxon>Bacteria</taxon>
        <taxon>Pseudomonadati</taxon>
        <taxon>Pseudomonadota</taxon>
        <taxon>Alphaproteobacteria</taxon>
        <taxon>Rickettsiales</taxon>
        <taxon>Anaplasmataceae</taxon>
        <taxon>Anaplasma</taxon>
        <taxon>phagocytophilum group</taxon>
    </lineage>
</organism>
<dbReference type="EC" id="1.1.1.267" evidence="1"/>
<dbReference type="EMBL" id="CP000235">
    <property type="protein sequence ID" value="ABD44127.1"/>
    <property type="molecule type" value="Genomic_DNA"/>
</dbReference>
<dbReference type="RefSeq" id="WP_011450566.1">
    <property type="nucleotide sequence ID" value="NC_007797.1"/>
</dbReference>
<dbReference type="SMR" id="Q2GKQ8"/>
<dbReference type="STRING" id="212042.APH_0440"/>
<dbReference type="PaxDb" id="212042-APH_0440"/>
<dbReference type="EnsemblBacteria" id="ABD44127">
    <property type="protein sequence ID" value="ABD44127"/>
    <property type="gene ID" value="APH_0440"/>
</dbReference>
<dbReference type="GeneID" id="92747386"/>
<dbReference type="KEGG" id="aph:APH_0440"/>
<dbReference type="eggNOG" id="COG0743">
    <property type="taxonomic scope" value="Bacteria"/>
</dbReference>
<dbReference type="HOGENOM" id="CLU_035714_0_0_5"/>
<dbReference type="UniPathway" id="UPA00056">
    <property type="reaction ID" value="UER00092"/>
</dbReference>
<dbReference type="Proteomes" id="UP000001943">
    <property type="component" value="Chromosome"/>
</dbReference>
<dbReference type="GO" id="GO:0030604">
    <property type="term" value="F:1-deoxy-D-xylulose-5-phosphate reductoisomerase activity"/>
    <property type="evidence" value="ECO:0007669"/>
    <property type="project" value="UniProtKB-UniRule"/>
</dbReference>
<dbReference type="GO" id="GO:0030145">
    <property type="term" value="F:manganese ion binding"/>
    <property type="evidence" value="ECO:0007669"/>
    <property type="project" value="TreeGrafter"/>
</dbReference>
<dbReference type="GO" id="GO:0070402">
    <property type="term" value="F:NADPH binding"/>
    <property type="evidence" value="ECO:0007669"/>
    <property type="project" value="InterPro"/>
</dbReference>
<dbReference type="GO" id="GO:0051484">
    <property type="term" value="P:isopentenyl diphosphate biosynthetic process, methylerythritol 4-phosphate pathway involved in terpenoid biosynthetic process"/>
    <property type="evidence" value="ECO:0007669"/>
    <property type="project" value="TreeGrafter"/>
</dbReference>
<dbReference type="Gene3D" id="1.10.1740.10">
    <property type="match status" value="1"/>
</dbReference>
<dbReference type="Gene3D" id="3.40.50.720">
    <property type="entry name" value="NAD(P)-binding Rossmann-like Domain"/>
    <property type="match status" value="1"/>
</dbReference>
<dbReference type="HAMAP" id="MF_00183">
    <property type="entry name" value="DXP_reductoisom"/>
    <property type="match status" value="1"/>
</dbReference>
<dbReference type="InterPro" id="IPR003821">
    <property type="entry name" value="DXP_reductoisomerase"/>
</dbReference>
<dbReference type="InterPro" id="IPR013644">
    <property type="entry name" value="DXP_reductoisomerase_C"/>
</dbReference>
<dbReference type="InterPro" id="IPR013512">
    <property type="entry name" value="DXP_reductoisomerase_N"/>
</dbReference>
<dbReference type="InterPro" id="IPR026877">
    <property type="entry name" value="DXPR_C"/>
</dbReference>
<dbReference type="InterPro" id="IPR036169">
    <property type="entry name" value="DXPR_C_sf"/>
</dbReference>
<dbReference type="InterPro" id="IPR036291">
    <property type="entry name" value="NAD(P)-bd_dom_sf"/>
</dbReference>
<dbReference type="NCBIfam" id="TIGR00243">
    <property type="entry name" value="Dxr"/>
    <property type="match status" value="1"/>
</dbReference>
<dbReference type="PANTHER" id="PTHR30525">
    <property type="entry name" value="1-DEOXY-D-XYLULOSE 5-PHOSPHATE REDUCTOISOMERASE"/>
    <property type="match status" value="1"/>
</dbReference>
<dbReference type="PANTHER" id="PTHR30525:SF0">
    <property type="entry name" value="1-DEOXY-D-XYLULOSE 5-PHOSPHATE REDUCTOISOMERASE, CHLOROPLASTIC"/>
    <property type="match status" value="1"/>
</dbReference>
<dbReference type="Pfam" id="PF08436">
    <property type="entry name" value="DXP_redisom_C"/>
    <property type="match status" value="1"/>
</dbReference>
<dbReference type="Pfam" id="PF02670">
    <property type="entry name" value="DXP_reductoisom"/>
    <property type="match status" value="1"/>
</dbReference>
<dbReference type="Pfam" id="PF13288">
    <property type="entry name" value="DXPR_C"/>
    <property type="match status" value="1"/>
</dbReference>
<dbReference type="PIRSF" id="PIRSF006205">
    <property type="entry name" value="Dxp_reductismrs"/>
    <property type="match status" value="1"/>
</dbReference>
<dbReference type="SUPFAM" id="SSF69055">
    <property type="entry name" value="1-deoxy-D-xylulose-5-phosphate reductoisomerase, C-terminal domain"/>
    <property type="match status" value="1"/>
</dbReference>
<dbReference type="SUPFAM" id="SSF55347">
    <property type="entry name" value="Glyceraldehyde-3-phosphate dehydrogenase-like, C-terminal domain"/>
    <property type="match status" value="1"/>
</dbReference>
<dbReference type="SUPFAM" id="SSF51735">
    <property type="entry name" value="NAD(P)-binding Rossmann-fold domains"/>
    <property type="match status" value="1"/>
</dbReference>
<feature type="chain" id="PRO_1000077331" description="1-deoxy-D-xylulose 5-phosphate reductoisomerase">
    <location>
        <begin position="1"/>
        <end position="385"/>
    </location>
</feature>
<feature type="binding site" evidence="1">
    <location>
        <position position="10"/>
    </location>
    <ligand>
        <name>NADPH</name>
        <dbReference type="ChEBI" id="CHEBI:57783"/>
    </ligand>
</feature>
<feature type="binding site" evidence="1">
    <location>
        <position position="11"/>
    </location>
    <ligand>
        <name>NADPH</name>
        <dbReference type="ChEBI" id="CHEBI:57783"/>
    </ligand>
</feature>
<feature type="binding site" evidence="1">
    <location>
        <position position="13"/>
    </location>
    <ligand>
        <name>NADPH</name>
        <dbReference type="ChEBI" id="CHEBI:57783"/>
    </ligand>
</feature>
<feature type="binding site" evidence="1">
    <location>
        <position position="36"/>
    </location>
    <ligand>
        <name>NADPH</name>
        <dbReference type="ChEBI" id="CHEBI:57783"/>
    </ligand>
</feature>
<feature type="binding site" evidence="1">
    <location>
        <position position="38"/>
    </location>
    <ligand>
        <name>NADPH</name>
        <dbReference type="ChEBI" id="CHEBI:57783"/>
    </ligand>
</feature>
<feature type="binding site" evidence="1">
    <location>
        <position position="123"/>
    </location>
    <ligand>
        <name>1-deoxy-D-xylulose 5-phosphate</name>
        <dbReference type="ChEBI" id="CHEBI:57792"/>
    </ligand>
</feature>
<feature type="binding site" evidence="1">
    <location>
        <position position="124"/>
    </location>
    <ligand>
        <name>NADPH</name>
        <dbReference type="ChEBI" id="CHEBI:57783"/>
    </ligand>
</feature>
<feature type="binding site" evidence="1">
    <location>
        <position position="148"/>
    </location>
    <ligand>
        <name>Mn(2+)</name>
        <dbReference type="ChEBI" id="CHEBI:29035"/>
    </ligand>
</feature>
<feature type="binding site" evidence="1">
    <location>
        <position position="149"/>
    </location>
    <ligand>
        <name>1-deoxy-D-xylulose 5-phosphate</name>
        <dbReference type="ChEBI" id="CHEBI:57792"/>
    </ligand>
</feature>
<feature type="binding site" evidence="1">
    <location>
        <position position="150"/>
    </location>
    <ligand>
        <name>1-deoxy-D-xylulose 5-phosphate</name>
        <dbReference type="ChEBI" id="CHEBI:57792"/>
    </ligand>
</feature>
<feature type="binding site" evidence="1">
    <location>
        <position position="150"/>
    </location>
    <ligand>
        <name>Mn(2+)</name>
        <dbReference type="ChEBI" id="CHEBI:29035"/>
    </ligand>
</feature>
<feature type="binding site" evidence="1">
    <location>
        <position position="172"/>
    </location>
    <ligand>
        <name>1-deoxy-D-xylulose 5-phosphate</name>
        <dbReference type="ChEBI" id="CHEBI:57792"/>
    </ligand>
</feature>
<feature type="binding site" evidence="1">
    <location>
        <position position="195"/>
    </location>
    <ligand>
        <name>1-deoxy-D-xylulose 5-phosphate</name>
        <dbReference type="ChEBI" id="CHEBI:57792"/>
    </ligand>
</feature>
<feature type="binding site" evidence="1">
    <location>
        <position position="201"/>
    </location>
    <ligand>
        <name>NADPH</name>
        <dbReference type="ChEBI" id="CHEBI:57783"/>
    </ligand>
</feature>
<feature type="binding site" evidence="1">
    <location>
        <position position="208"/>
    </location>
    <ligand>
        <name>1-deoxy-D-xylulose 5-phosphate</name>
        <dbReference type="ChEBI" id="CHEBI:57792"/>
    </ligand>
</feature>
<feature type="binding site" evidence="1">
    <location>
        <position position="213"/>
    </location>
    <ligand>
        <name>1-deoxy-D-xylulose 5-phosphate</name>
        <dbReference type="ChEBI" id="CHEBI:57792"/>
    </ligand>
</feature>
<feature type="binding site" evidence="1">
    <location>
        <position position="214"/>
    </location>
    <ligand>
        <name>1-deoxy-D-xylulose 5-phosphate</name>
        <dbReference type="ChEBI" id="CHEBI:57792"/>
    </ligand>
</feature>
<feature type="binding site" evidence="1">
    <location>
        <position position="217"/>
    </location>
    <ligand>
        <name>1-deoxy-D-xylulose 5-phosphate</name>
        <dbReference type="ChEBI" id="CHEBI:57792"/>
    </ligand>
</feature>
<feature type="binding site" evidence="1">
    <location>
        <position position="217"/>
    </location>
    <ligand>
        <name>Mn(2+)</name>
        <dbReference type="ChEBI" id="CHEBI:29035"/>
    </ligand>
</feature>
<comment type="function">
    <text evidence="1">Catalyzes the NADPH-dependent rearrangement and reduction of 1-deoxy-D-xylulose-5-phosphate (DXP) to 2-C-methyl-D-erythritol 4-phosphate (MEP).</text>
</comment>
<comment type="catalytic activity">
    <reaction evidence="1">
        <text>2-C-methyl-D-erythritol 4-phosphate + NADP(+) = 1-deoxy-D-xylulose 5-phosphate + NADPH + H(+)</text>
        <dbReference type="Rhea" id="RHEA:13717"/>
        <dbReference type="ChEBI" id="CHEBI:15378"/>
        <dbReference type="ChEBI" id="CHEBI:57783"/>
        <dbReference type="ChEBI" id="CHEBI:57792"/>
        <dbReference type="ChEBI" id="CHEBI:58262"/>
        <dbReference type="ChEBI" id="CHEBI:58349"/>
        <dbReference type="EC" id="1.1.1.267"/>
    </reaction>
    <physiologicalReaction direction="right-to-left" evidence="1">
        <dbReference type="Rhea" id="RHEA:13719"/>
    </physiologicalReaction>
</comment>
<comment type="cofactor">
    <cofactor evidence="1">
        <name>Mg(2+)</name>
        <dbReference type="ChEBI" id="CHEBI:18420"/>
    </cofactor>
    <cofactor evidence="1">
        <name>Mn(2+)</name>
        <dbReference type="ChEBI" id="CHEBI:29035"/>
    </cofactor>
</comment>
<comment type="pathway">
    <text evidence="1">Isoprenoid biosynthesis; isopentenyl diphosphate biosynthesis via DXP pathway; isopentenyl diphosphate from 1-deoxy-D-xylulose 5-phosphate: step 1/6.</text>
</comment>
<comment type="similarity">
    <text evidence="1">Belongs to the DXR family.</text>
</comment>
<sequence>MKKVSVFGSTGFIGKTTVGILSGNTEDFKVIALVAGSNVSLLAQQAKLLNAEMAVIADDAQYEELKRSLHGSGIRVAAGKEAVLEAAALSVDTAVMAITGIVALSAVMRLIESGVGTIALASKESVVCGGVLLRDAACKSGTRIVPVDSEHNAVFRLLSQGDNPYKITITASGGPFLHWSHDQLKSVTIEDALVHPVWKMGKKISVDSATMMNKALEVLEASYLFELGYRKIDVVIHPESIVHALAFYQDGTSTALMSLPDMSIPILHALYWPHRKEVSVREVDLIAYGKLTFIRPDFERFPALKAAFDILQSSERDVASIVFNAANEVAVESFLNSEITFLEIVNIVLHVMNKVPYGKVSSLADIMEYDLLGRCIAREVISDAS</sequence>
<protein>
    <recommendedName>
        <fullName evidence="1">1-deoxy-D-xylulose 5-phosphate reductoisomerase</fullName>
        <shortName evidence="1">DXP reductoisomerase</shortName>
        <ecNumber evidence="1">1.1.1.267</ecNumber>
    </recommendedName>
    <alternativeName>
        <fullName evidence="1">1-deoxyxylulose-5-phosphate reductoisomerase</fullName>
    </alternativeName>
    <alternativeName>
        <fullName evidence="1">2-C-methyl-D-erythritol 4-phosphate synthase</fullName>
    </alternativeName>
</protein>
<keyword id="KW-0414">Isoprene biosynthesis</keyword>
<keyword id="KW-0464">Manganese</keyword>
<keyword id="KW-0479">Metal-binding</keyword>
<keyword id="KW-0521">NADP</keyword>
<keyword id="KW-0560">Oxidoreductase</keyword>
<gene>
    <name evidence="1" type="primary">dxr</name>
    <name type="ordered locus">APH_0440</name>
</gene>
<reference key="1">
    <citation type="journal article" date="2006" name="PLoS Genet.">
        <title>Comparative genomics of emerging human ehrlichiosis agents.</title>
        <authorList>
            <person name="Dunning Hotopp J.C."/>
            <person name="Lin M."/>
            <person name="Madupu R."/>
            <person name="Crabtree J."/>
            <person name="Angiuoli S.V."/>
            <person name="Eisen J.A."/>
            <person name="Seshadri R."/>
            <person name="Ren Q."/>
            <person name="Wu M."/>
            <person name="Utterback T.R."/>
            <person name="Smith S."/>
            <person name="Lewis M."/>
            <person name="Khouri H."/>
            <person name="Zhang C."/>
            <person name="Niu H."/>
            <person name="Lin Q."/>
            <person name="Ohashi N."/>
            <person name="Zhi N."/>
            <person name="Nelson W.C."/>
            <person name="Brinkac L.M."/>
            <person name="Dodson R.J."/>
            <person name="Rosovitz M.J."/>
            <person name="Sundaram J.P."/>
            <person name="Daugherty S.C."/>
            <person name="Davidsen T."/>
            <person name="Durkin A.S."/>
            <person name="Gwinn M.L."/>
            <person name="Haft D.H."/>
            <person name="Selengut J.D."/>
            <person name="Sullivan S.A."/>
            <person name="Zafar N."/>
            <person name="Zhou L."/>
            <person name="Benahmed F."/>
            <person name="Forberger H."/>
            <person name="Halpin R."/>
            <person name="Mulligan S."/>
            <person name="Robinson J."/>
            <person name="White O."/>
            <person name="Rikihisa Y."/>
            <person name="Tettelin H."/>
        </authorList>
    </citation>
    <scope>NUCLEOTIDE SEQUENCE [LARGE SCALE GENOMIC DNA]</scope>
    <source>
        <strain>HZ</strain>
    </source>
</reference>
<name>DXR_ANAPZ</name>
<evidence type="ECO:0000255" key="1">
    <source>
        <dbReference type="HAMAP-Rule" id="MF_00183"/>
    </source>
</evidence>
<proteinExistence type="inferred from homology"/>